<protein>
    <recommendedName>
        <fullName>AsmA family protein YhjG</fullName>
    </recommendedName>
</protein>
<accession>P37645</accession>
<accession>P37644</accession>
<accession>Q2M7I6</accession>
<name>YHJG_ECOLI</name>
<organism>
    <name type="scientific">Escherichia coli (strain K12)</name>
    <dbReference type="NCBI Taxonomy" id="83333"/>
    <lineage>
        <taxon>Bacteria</taxon>
        <taxon>Pseudomonadati</taxon>
        <taxon>Pseudomonadota</taxon>
        <taxon>Gammaproteobacteria</taxon>
        <taxon>Enterobacterales</taxon>
        <taxon>Enterobacteriaceae</taxon>
        <taxon>Escherichia</taxon>
    </lineage>
</organism>
<proteinExistence type="inferred from homology"/>
<evidence type="ECO:0000255" key="1"/>
<evidence type="ECO:0000256" key="2">
    <source>
        <dbReference type="SAM" id="MobiDB-lite"/>
    </source>
</evidence>
<evidence type="ECO:0000269" key="3">
    <source>
    </source>
</evidence>
<evidence type="ECO:0000305" key="4"/>
<evidence type="ECO:0000305" key="5">
    <source>
    </source>
</evidence>
<comment type="subcellular location">
    <subcellularLocation>
        <location evidence="5">Cell inner membrane</location>
        <topology evidence="1">Single-pass membrane protein</topology>
    </subcellularLocation>
</comment>
<comment type="disruption phenotype">
    <text evidence="3">The mutant does not exhibit growth defects and does not show outer membrane permeability defects.</text>
</comment>
<comment type="similarity">
    <text evidence="4">Belongs to the AsmA family.</text>
</comment>
<comment type="sequence caution" evidence="4">
    <conflict type="erroneous initiation">
        <sequence resource="EMBL-CDS" id="AAB18501"/>
    </conflict>
    <text>Extended N-terminus.</text>
</comment>
<comment type="sequence caution" evidence="4">
    <conflict type="frameshift">
        <sequence resource="EMBL-CDS" id="AAB18501"/>
    </conflict>
</comment>
<comment type="sequence caution" evidence="4">
    <conflict type="erroneous initiation">
        <sequence resource="EMBL-CDS" id="BAE77770"/>
    </conflict>
    <text>Extended N-terminus.</text>
</comment>
<keyword id="KW-0997">Cell inner membrane</keyword>
<keyword id="KW-1003">Cell membrane</keyword>
<keyword id="KW-0472">Membrane</keyword>
<keyword id="KW-1185">Reference proteome</keyword>
<keyword id="KW-0812">Transmembrane</keyword>
<keyword id="KW-1133">Transmembrane helix</keyword>
<reference key="1">
    <citation type="journal article" date="1994" name="Nucleic Acids Res.">
        <title>Analysis of the Escherichia coli genome. V. DNA sequence of the region from 76.0 to 81.5 minutes.</title>
        <authorList>
            <person name="Sofia H.J."/>
            <person name="Burland V."/>
            <person name="Daniels D.L."/>
            <person name="Plunkett G. III"/>
            <person name="Blattner F.R."/>
        </authorList>
    </citation>
    <scope>NUCLEOTIDE SEQUENCE [LARGE SCALE GENOMIC DNA]</scope>
    <source>
        <strain>K12 / MG1655 / ATCC 47076</strain>
    </source>
</reference>
<reference key="2">
    <citation type="journal article" date="1997" name="Science">
        <title>The complete genome sequence of Escherichia coli K-12.</title>
        <authorList>
            <person name="Blattner F.R."/>
            <person name="Plunkett G. III"/>
            <person name="Bloch C.A."/>
            <person name="Perna N.T."/>
            <person name="Burland V."/>
            <person name="Riley M."/>
            <person name="Collado-Vides J."/>
            <person name="Glasner J.D."/>
            <person name="Rode C.K."/>
            <person name="Mayhew G.F."/>
            <person name="Gregor J."/>
            <person name="Davis N.W."/>
            <person name="Kirkpatrick H.A."/>
            <person name="Goeden M.A."/>
            <person name="Rose D.J."/>
            <person name="Mau B."/>
            <person name="Shao Y."/>
        </authorList>
    </citation>
    <scope>SEQUENCE REVISION</scope>
    <source>
        <strain>K12 / MG1655 / ATCC 47076</strain>
    </source>
</reference>
<reference key="3">
    <citation type="journal article" date="2006" name="Mol. Syst. Biol.">
        <title>Highly accurate genome sequences of Escherichia coli K-12 strains MG1655 and W3110.</title>
        <authorList>
            <person name="Hayashi K."/>
            <person name="Morooka N."/>
            <person name="Yamamoto Y."/>
            <person name="Fujita K."/>
            <person name="Isono K."/>
            <person name="Choi S."/>
            <person name="Ohtsubo E."/>
            <person name="Baba T."/>
            <person name="Wanner B.L."/>
            <person name="Mori H."/>
            <person name="Horiuchi T."/>
        </authorList>
    </citation>
    <scope>NUCLEOTIDE SEQUENCE [LARGE SCALE GENOMIC DNA]</scope>
    <source>
        <strain>K12 / W3110 / ATCC 27325 / DSM 5911</strain>
    </source>
</reference>
<reference key="4">
    <citation type="journal article" date="2021" name="MBio">
        <title>YhdP, TamB, and YdbH Are Redundant but Essential for Growth and Lipid Homeostasis of the Gram-Negative Outer Membrane.</title>
        <authorList>
            <person name="Ruiz N."/>
            <person name="Davis R.M."/>
            <person name="Kumar S."/>
        </authorList>
    </citation>
    <scope>DISRUPTION PHENOTYPE</scope>
    <source>
        <strain>K12 / MG1655 / ATCC 47076</strain>
    </source>
</reference>
<gene>
    <name type="primary">yhjG</name>
    <name type="synonym">yhjF</name>
    <name type="ordered locus">b3524</name>
    <name type="ordered locus">JW3492</name>
</gene>
<dbReference type="EMBL" id="U00039">
    <property type="protein sequence ID" value="AAB18501.1"/>
    <property type="status" value="ALT_SEQ"/>
    <property type="molecule type" value="Genomic_DNA"/>
</dbReference>
<dbReference type="EMBL" id="U00096">
    <property type="protein sequence ID" value="AAC76549.2"/>
    <property type="molecule type" value="Genomic_DNA"/>
</dbReference>
<dbReference type="EMBL" id="AP009048">
    <property type="protein sequence ID" value="BAE77770.1"/>
    <property type="status" value="ALT_INIT"/>
    <property type="molecule type" value="Genomic_DNA"/>
</dbReference>
<dbReference type="PIR" id="G65150">
    <property type="entry name" value="G65150"/>
</dbReference>
<dbReference type="RefSeq" id="NP_417981.2">
    <property type="nucleotide sequence ID" value="NC_000913.3"/>
</dbReference>
<dbReference type="RefSeq" id="WP_001296794.1">
    <property type="nucleotide sequence ID" value="NZ_STEB01000018.1"/>
</dbReference>
<dbReference type="BioGRID" id="4262155">
    <property type="interactions" value="20"/>
</dbReference>
<dbReference type="DIP" id="DIP-12381N"/>
<dbReference type="FunCoup" id="P37645">
    <property type="interactions" value="23"/>
</dbReference>
<dbReference type="IntAct" id="P37645">
    <property type="interactions" value="2"/>
</dbReference>
<dbReference type="STRING" id="511145.b3524"/>
<dbReference type="TCDB" id="9.B.121.1.1">
    <property type="family name" value="the asma (asma) family"/>
</dbReference>
<dbReference type="jPOST" id="P37645"/>
<dbReference type="PaxDb" id="511145-b3524"/>
<dbReference type="EnsemblBacteria" id="AAC76549">
    <property type="protein sequence ID" value="AAC76549"/>
    <property type="gene ID" value="b3524"/>
</dbReference>
<dbReference type="GeneID" id="948043"/>
<dbReference type="KEGG" id="ecj:JW3492"/>
<dbReference type="KEGG" id="eco:b3524"/>
<dbReference type="KEGG" id="ecoc:C3026_19090"/>
<dbReference type="PATRIC" id="fig|511145.12.peg.3633"/>
<dbReference type="EchoBASE" id="EB2161"/>
<dbReference type="eggNOG" id="COG2982">
    <property type="taxonomic scope" value="Bacteria"/>
</dbReference>
<dbReference type="HOGENOM" id="CLU_017234_1_1_6"/>
<dbReference type="InParanoid" id="P37645"/>
<dbReference type="OrthoDB" id="5749006at2"/>
<dbReference type="PhylomeDB" id="P37645"/>
<dbReference type="BioCyc" id="EcoCyc:EG12251-MONOMER"/>
<dbReference type="PRO" id="PR:P37645"/>
<dbReference type="Proteomes" id="UP000000625">
    <property type="component" value="Chromosome"/>
</dbReference>
<dbReference type="GO" id="GO:0005886">
    <property type="term" value="C:plasma membrane"/>
    <property type="evidence" value="ECO:0000314"/>
    <property type="project" value="EcoCyc"/>
</dbReference>
<dbReference type="GO" id="GO:0090313">
    <property type="term" value="P:regulation of protein targeting to membrane"/>
    <property type="evidence" value="ECO:0000318"/>
    <property type="project" value="GO_Central"/>
</dbReference>
<dbReference type="InterPro" id="IPR007844">
    <property type="entry name" value="AsmA"/>
</dbReference>
<dbReference type="InterPro" id="IPR052894">
    <property type="entry name" value="AsmA-related"/>
</dbReference>
<dbReference type="PANTHER" id="PTHR30441:SF9">
    <property type="entry name" value="ASMA FAMILY PROTEIN YHJG"/>
    <property type="match status" value="1"/>
</dbReference>
<dbReference type="PANTHER" id="PTHR30441">
    <property type="entry name" value="DUF748 DOMAIN-CONTAINING PROTEIN"/>
    <property type="match status" value="1"/>
</dbReference>
<dbReference type="Pfam" id="PF05170">
    <property type="entry name" value="AsmA"/>
    <property type="match status" value="1"/>
</dbReference>
<feature type="chain" id="PRO_0000169572" description="AsmA family protein YhjG">
    <location>
        <begin position="1"/>
        <end position="686"/>
    </location>
</feature>
<feature type="topological domain" description="Cytoplasmic" evidence="5">
    <location>
        <begin position="1"/>
        <end position="6"/>
    </location>
</feature>
<feature type="transmembrane region" description="Helical" evidence="1">
    <location>
        <begin position="7"/>
        <end position="27"/>
    </location>
</feature>
<feature type="topological domain" description="Periplasmic" evidence="5">
    <location>
        <begin position="28"/>
        <end position="686"/>
    </location>
</feature>
<feature type="region of interest" description="Disordered" evidence="2">
    <location>
        <begin position="372"/>
        <end position="396"/>
    </location>
</feature>
<feature type="compositionally biased region" description="Basic and acidic residues" evidence="2">
    <location>
        <begin position="376"/>
        <end position="391"/>
    </location>
</feature>
<sequence>MSKAGKITAAISGAFLLLIVVAIILIATFDWNRLKPTINQKVSAELNRPFAIRGDLGVVWERQKQETGWRSWVPWPHVHAEDIILGNPPDIPEVTMVHLPRVEATLAPLALLTKTVWLPWIKLEKPDARLIRLSEKNNNWTFNLANDDNKDANAKPSAWSFRLDNILFDQGRIAIDDKVSKADLEIFVDPLGKPLPFSEVTGSKGKADKEKVGDYVFGLKAQGRYNGEPLTGTGKIGGMLALRGEGTPFPVQADFRSGNTRVAFDGVVNDPMKMGGVDLRLKFSGDSLGDLYELTGVLLPDTPPFETDGRLVAKIDTEKSSVFDYRGFNGRIGDSDIHGSLVYTTGKPRPKLEGDVESRQLRLADLGPLIGVDSGKGAEKSKRSEQKKGEKSVQPAGKVLPYDRFETDKWDVMDADVRFKGRRIEHGSSLPISDLSTHIILKNADLRLQPLKFGMAGGSIAANIHLEGDKKPMQGRADIQARRLKLKELMPDVELMQKTLGEMNGDAELRGSGNSVAALLGNSNGNLKLLMNDGLVSRNLMEIVGLNVGNYIVGAIFGDDEVRVNCAAANLNIANGVARPQIFAFDTENALINVTGTASFASEQLDLTIDPESKGIRIITLRSPLYVRGTFKNPQAGVKAGPLIARGAVAAALATLVTPAAALLALISPSEGEANQCRTILSQMKK</sequence>